<reference key="1">
    <citation type="submission" date="2008-02" db="EMBL/GenBank/DDBJ databases">
        <title>Complete sequence of Escherichia coli C str. ATCC 8739.</title>
        <authorList>
            <person name="Copeland A."/>
            <person name="Lucas S."/>
            <person name="Lapidus A."/>
            <person name="Glavina del Rio T."/>
            <person name="Dalin E."/>
            <person name="Tice H."/>
            <person name="Bruce D."/>
            <person name="Goodwin L."/>
            <person name="Pitluck S."/>
            <person name="Kiss H."/>
            <person name="Brettin T."/>
            <person name="Detter J.C."/>
            <person name="Han C."/>
            <person name="Kuske C.R."/>
            <person name="Schmutz J."/>
            <person name="Larimer F."/>
            <person name="Land M."/>
            <person name="Hauser L."/>
            <person name="Kyrpides N."/>
            <person name="Mikhailova N."/>
            <person name="Ingram L."/>
            <person name="Richardson P."/>
        </authorList>
    </citation>
    <scope>NUCLEOTIDE SEQUENCE [LARGE SCALE GENOMIC DNA]</scope>
    <source>
        <strain>ATCC 8739 / DSM 1576 / NBRC 3972 / NCIMB 8545 / WDCM 00012 / Crooks</strain>
    </source>
</reference>
<gene>
    <name evidence="1" type="primary">frdC</name>
    <name type="ordered locus">EcolC_3858</name>
</gene>
<organism>
    <name type="scientific">Escherichia coli (strain ATCC 8739 / DSM 1576 / NBRC 3972 / NCIMB 8545 / WDCM 00012 / Crooks)</name>
    <dbReference type="NCBI Taxonomy" id="481805"/>
    <lineage>
        <taxon>Bacteria</taxon>
        <taxon>Pseudomonadati</taxon>
        <taxon>Pseudomonadota</taxon>
        <taxon>Gammaproteobacteria</taxon>
        <taxon>Enterobacterales</taxon>
        <taxon>Enterobacteriaceae</taxon>
        <taxon>Escherichia</taxon>
    </lineage>
</organism>
<comment type="function">
    <text evidence="1">Two distinct, membrane-bound, FAD-containing enzymes are responsible for the catalysis of fumarate and succinate interconversion; fumarate reductase is used in anaerobic growth, and succinate dehydrogenase is used in aerobic growth. Anchors the catalytic components of the fumarate reductase complex to the cell inner membrane, binds quinones.</text>
</comment>
<comment type="subunit">
    <text evidence="1">Part of an enzyme complex containing four subunits: a flavoprotein (FrdA), an iron-sulfur protein (FrdB), and two hydrophobic anchor proteins (FrdC and FrdD).</text>
</comment>
<comment type="subcellular location">
    <subcellularLocation>
        <location evidence="1">Cell inner membrane</location>
        <topology evidence="1">Multi-pass membrane protein</topology>
    </subcellularLocation>
</comment>
<comment type="similarity">
    <text evidence="1">Belongs to the FrdC family.</text>
</comment>
<evidence type="ECO:0000255" key="1">
    <source>
        <dbReference type="HAMAP-Rule" id="MF_00708"/>
    </source>
</evidence>
<sequence>MTTKRKPYVRPMTSTWWKKLPFYRFYMLREGTAVPAVWFSIELIFGLFALKNGPEAWAGFVDFLQNPVIVIINLITLAAALLHTKTWFELAPKAANIIVKDEKMGPEPIIKSLWAVTVVATIVILFVALYW</sequence>
<protein>
    <recommendedName>
        <fullName evidence="1">Fumarate reductase subunit C</fullName>
    </recommendedName>
    <alternativeName>
        <fullName evidence="1">Fumarate reductase 15 kDa hydrophobic protein</fullName>
    </alternativeName>
    <alternativeName>
        <fullName evidence="1">Quinol-fumarate reductase subunit C</fullName>
        <shortName evidence="1">QFR subunit C</shortName>
    </alternativeName>
</protein>
<name>FRDC_ECOLC</name>
<feature type="chain" id="PRO_1000083197" description="Fumarate reductase subunit C">
    <location>
        <begin position="1"/>
        <end position="131"/>
    </location>
</feature>
<feature type="transmembrane region" description="Helical" evidence="1">
    <location>
        <begin position="30"/>
        <end position="50"/>
    </location>
</feature>
<feature type="transmembrane region" description="Helical" evidence="1">
    <location>
        <begin position="63"/>
        <end position="83"/>
    </location>
</feature>
<feature type="transmembrane region" description="Helical" evidence="1">
    <location>
        <begin position="109"/>
        <end position="129"/>
    </location>
</feature>
<dbReference type="EMBL" id="CP000946">
    <property type="protein sequence ID" value="ACA79462.1"/>
    <property type="molecule type" value="Genomic_DNA"/>
</dbReference>
<dbReference type="RefSeq" id="WP_000208757.1">
    <property type="nucleotide sequence ID" value="NZ_MTFT01000012.1"/>
</dbReference>
<dbReference type="SMR" id="B1ITP4"/>
<dbReference type="GeneID" id="93777670"/>
<dbReference type="KEGG" id="ecl:EcolC_3858"/>
<dbReference type="HOGENOM" id="CLU_156492_0_0_6"/>
<dbReference type="GO" id="GO:0045283">
    <property type="term" value="C:fumarate reductase complex"/>
    <property type="evidence" value="ECO:0007669"/>
    <property type="project" value="UniProtKB-UniRule"/>
</dbReference>
<dbReference type="GO" id="GO:0005886">
    <property type="term" value="C:plasma membrane"/>
    <property type="evidence" value="ECO:0007669"/>
    <property type="project" value="UniProtKB-SubCell"/>
</dbReference>
<dbReference type="GO" id="GO:0000104">
    <property type="term" value="F:succinate dehydrogenase activity"/>
    <property type="evidence" value="ECO:0007669"/>
    <property type="project" value="UniProtKB-UniRule"/>
</dbReference>
<dbReference type="CDD" id="cd00546">
    <property type="entry name" value="QFR_TypeD_subunitC"/>
    <property type="match status" value="1"/>
</dbReference>
<dbReference type="FunFam" id="1.20.1300.10:FF:000003">
    <property type="entry name" value="Fumarate reductase subunit C"/>
    <property type="match status" value="1"/>
</dbReference>
<dbReference type="Gene3D" id="1.20.1300.10">
    <property type="entry name" value="Fumarate reductase/succinate dehydrogenase, transmembrane subunit"/>
    <property type="match status" value="1"/>
</dbReference>
<dbReference type="HAMAP" id="MF_00708">
    <property type="entry name" value="Fumarate_red_C"/>
    <property type="match status" value="1"/>
</dbReference>
<dbReference type="InterPro" id="IPR003510">
    <property type="entry name" value="Fumarate_red_C"/>
</dbReference>
<dbReference type="InterPro" id="IPR034804">
    <property type="entry name" value="SQR/QFR_C/D"/>
</dbReference>
<dbReference type="NCBIfam" id="NF003445">
    <property type="entry name" value="PRK04987.1"/>
    <property type="match status" value="1"/>
</dbReference>
<dbReference type="Pfam" id="PF02300">
    <property type="entry name" value="Fumarate_red_C"/>
    <property type="match status" value="1"/>
</dbReference>
<dbReference type="PIRSF" id="PIRSF000180">
    <property type="entry name" value="FrdC"/>
    <property type="match status" value="1"/>
</dbReference>
<dbReference type="SUPFAM" id="SSF81343">
    <property type="entry name" value="Fumarate reductase respiratory complex transmembrane subunits"/>
    <property type="match status" value="1"/>
</dbReference>
<keyword id="KW-0997">Cell inner membrane</keyword>
<keyword id="KW-1003">Cell membrane</keyword>
<keyword id="KW-0472">Membrane</keyword>
<keyword id="KW-0812">Transmembrane</keyword>
<keyword id="KW-1133">Transmembrane helix</keyword>
<accession>B1ITP4</accession>
<proteinExistence type="inferred from homology"/>